<protein>
    <recommendedName>
        <fullName evidence="1">Ribulose bisphosphate carboxylase large chain</fullName>
        <shortName evidence="1">RuBisCO large subunit</shortName>
        <ecNumber evidence="1">4.1.1.39</ecNumber>
    </recommendedName>
</protein>
<proteinExistence type="evidence at protein level"/>
<keyword id="KW-0007">Acetylation</keyword>
<keyword id="KW-0113">Calvin cycle</keyword>
<keyword id="KW-0120">Carbon dioxide fixation</keyword>
<keyword id="KW-0150">Chloroplast</keyword>
<keyword id="KW-0903">Direct protein sequencing</keyword>
<keyword id="KW-1015">Disulfide bond</keyword>
<keyword id="KW-0456">Lyase</keyword>
<keyword id="KW-0460">Magnesium</keyword>
<keyword id="KW-0479">Metal-binding</keyword>
<keyword id="KW-0488">Methylation</keyword>
<keyword id="KW-0503">Monooxygenase</keyword>
<keyword id="KW-0560">Oxidoreductase</keyword>
<keyword id="KW-0601">Photorespiration</keyword>
<keyword id="KW-0602">Photosynthesis</keyword>
<keyword id="KW-0934">Plastid</keyword>
<keyword id="KW-1185">Reference proteome</keyword>
<comment type="function">
    <text evidence="1">RuBisCO catalyzes two reactions: the carboxylation of D-ribulose 1,5-bisphosphate, the primary event in carbon dioxide fixation, as well as the oxidative fragmentation of the pentose substrate in the photorespiration process. Both reactions occur simultaneously and in competition at the same active site.</text>
</comment>
<comment type="catalytic activity">
    <reaction evidence="1">
        <text>2 (2R)-3-phosphoglycerate + 2 H(+) = D-ribulose 1,5-bisphosphate + CO2 + H2O</text>
        <dbReference type="Rhea" id="RHEA:23124"/>
        <dbReference type="ChEBI" id="CHEBI:15377"/>
        <dbReference type="ChEBI" id="CHEBI:15378"/>
        <dbReference type="ChEBI" id="CHEBI:16526"/>
        <dbReference type="ChEBI" id="CHEBI:57870"/>
        <dbReference type="ChEBI" id="CHEBI:58272"/>
        <dbReference type="EC" id="4.1.1.39"/>
    </reaction>
</comment>
<comment type="catalytic activity">
    <reaction evidence="1">
        <text>D-ribulose 1,5-bisphosphate + O2 = 2-phosphoglycolate + (2R)-3-phosphoglycerate + 2 H(+)</text>
        <dbReference type="Rhea" id="RHEA:36631"/>
        <dbReference type="ChEBI" id="CHEBI:15378"/>
        <dbReference type="ChEBI" id="CHEBI:15379"/>
        <dbReference type="ChEBI" id="CHEBI:57870"/>
        <dbReference type="ChEBI" id="CHEBI:58033"/>
        <dbReference type="ChEBI" id="CHEBI:58272"/>
    </reaction>
</comment>
<comment type="cofactor">
    <cofactor evidence="1">
        <name>Mg(2+)</name>
        <dbReference type="ChEBI" id="CHEBI:18420"/>
    </cofactor>
    <text evidence="1">Binds 1 Mg(2+) ion per subunit.</text>
</comment>
<comment type="subunit">
    <text evidence="1">Heterohexadecamer of 8 large chains and 8 small chains; disulfide-linked. The disulfide link is formed within the large subunit homodimers.</text>
</comment>
<comment type="subcellular location">
    <subcellularLocation>
        <location>Plastid</location>
        <location>Chloroplast</location>
    </subcellularLocation>
</comment>
<comment type="PTM">
    <text evidence="1">The disulfide bond which can form in the large chain dimeric partners within the hexadecamer appears to be associated with oxidative stress and protein turnover.</text>
</comment>
<comment type="miscellaneous">
    <text evidence="1">The basic functional RuBisCO is composed of a large chain homodimer in a 'head-to-tail' conformation. In form I RuBisCO this homodimer is arranged in a barrel-like tetramer with the small subunits forming a tetrameric 'cap' on each end of the 'barrel'.</text>
</comment>
<comment type="similarity">
    <text evidence="1">Belongs to the RuBisCO large chain family. Type I subfamily.</text>
</comment>
<reference key="1">
    <citation type="journal article" date="1995" name="J. Plant Physiol.">
        <title>An open reading frame (ycf11) is evolutionary conserved from Cyanobacteria to the plastid DNAs of Archegoniates and Gymnosperms is modified in the plastid DNAs of Dicots and is not plastome encoded in Monocots.</title>
        <authorList>
            <person name="Kruse S."/>
            <person name="Martin W."/>
            <person name="Wehe M."/>
            <person name="Reski R."/>
        </authorList>
    </citation>
    <scope>NUCLEOTIDE SEQUENCE [GENOMIC DNA]</scope>
</reference>
<reference key="2">
    <citation type="submission" date="2001-07" db="EMBL/GenBank/DDBJ databases">
        <title>Physcomitrella patens chloroplast genes.</title>
        <authorList>
            <person name="Sugita M."/>
            <person name="Sugiura C."/>
        </authorList>
    </citation>
    <scope>NUCLEOTIDE SEQUENCE [GENOMIC DNA]</scope>
    <source>
        <tissue>Protonema</tissue>
    </source>
</reference>
<reference key="3">
    <citation type="journal article" date="2003" name="Nucleic Acids Res.">
        <title>Complete chloroplast DNA sequence of the moss Physcomitrella patens: evidence for the loss and relocation of rpoA from the chloroplast to the nucleus.</title>
        <authorList>
            <person name="Sugiura C."/>
            <person name="Kobayashi Y."/>
            <person name="Setsuyuki A."/>
            <person name="Sugita C."/>
            <person name="Sugita M."/>
        </authorList>
    </citation>
    <scope>NUCLEOTIDE SEQUENCE [LARGE SCALE GENOMIC DNA]</scope>
    <source>
        <strain>cv. Gransden 2004</strain>
    </source>
</reference>
<reference key="4">
    <citation type="journal article" date="1997" name="Planta">
        <title>Cytokinin affects nuclear- and plastome-encoded energy-converting plastid enzymes.</title>
        <authorList>
            <person name="Kasten B."/>
            <person name="Buck F."/>
            <person name="Nuske J."/>
            <person name="Reski R."/>
        </authorList>
    </citation>
    <scope>PROTEIN SEQUENCE OF 184-195</scope>
    <source>
        <tissue>Protonema</tissue>
    </source>
</reference>
<feature type="propeptide" id="PRO_0000031347" evidence="1">
    <location>
        <begin position="1"/>
        <end position="2"/>
    </location>
</feature>
<feature type="chain" id="PRO_0000031348" description="Ribulose bisphosphate carboxylase large chain">
    <location>
        <begin position="3"/>
        <end position="475"/>
    </location>
</feature>
<feature type="active site" description="Proton acceptor" evidence="1">
    <location>
        <position position="175"/>
    </location>
</feature>
<feature type="active site" description="Proton acceptor" evidence="1">
    <location>
        <position position="294"/>
    </location>
</feature>
<feature type="binding site" description="in homodimeric partner" evidence="1">
    <location>
        <position position="123"/>
    </location>
    <ligand>
        <name>substrate</name>
    </ligand>
</feature>
<feature type="binding site" evidence="1">
    <location>
        <position position="173"/>
    </location>
    <ligand>
        <name>substrate</name>
    </ligand>
</feature>
<feature type="binding site" evidence="1">
    <location>
        <position position="177"/>
    </location>
    <ligand>
        <name>substrate</name>
    </ligand>
</feature>
<feature type="binding site" description="via carbamate group" evidence="1">
    <location>
        <position position="201"/>
    </location>
    <ligand>
        <name>Mg(2+)</name>
        <dbReference type="ChEBI" id="CHEBI:18420"/>
    </ligand>
</feature>
<feature type="binding site" evidence="1">
    <location>
        <position position="203"/>
    </location>
    <ligand>
        <name>Mg(2+)</name>
        <dbReference type="ChEBI" id="CHEBI:18420"/>
    </ligand>
</feature>
<feature type="binding site" evidence="1">
    <location>
        <position position="204"/>
    </location>
    <ligand>
        <name>Mg(2+)</name>
        <dbReference type="ChEBI" id="CHEBI:18420"/>
    </ligand>
</feature>
<feature type="binding site" evidence="1">
    <location>
        <position position="295"/>
    </location>
    <ligand>
        <name>substrate</name>
    </ligand>
</feature>
<feature type="binding site" evidence="1">
    <location>
        <position position="327"/>
    </location>
    <ligand>
        <name>substrate</name>
    </ligand>
</feature>
<feature type="binding site" evidence="1">
    <location>
        <position position="379"/>
    </location>
    <ligand>
        <name>substrate</name>
    </ligand>
</feature>
<feature type="site" description="Transition state stabilizer" evidence="1">
    <location>
        <position position="334"/>
    </location>
</feature>
<feature type="modified residue" description="N-acetylproline" evidence="1">
    <location>
        <position position="3"/>
    </location>
</feature>
<feature type="modified residue" description="N6,N6,N6-trimethyllysine" evidence="1">
    <location>
        <position position="14"/>
    </location>
</feature>
<feature type="modified residue" description="N6-carboxylysine" evidence="1">
    <location>
        <position position="201"/>
    </location>
</feature>
<feature type="disulfide bond" description="Interchain; in linked form" evidence="1">
    <location>
        <position position="247"/>
    </location>
</feature>
<feature type="sequence conflict" description="In Ref. 1; CAA52269." evidence="2" ref="1">
    <original>A</original>
    <variation>T</variation>
    <location>
        <position position="9"/>
    </location>
</feature>
<feature type="sequence conflict" description="In Ref. 1; CAA52269." evidence="2" ref="1">
    <original>Q</original>
    <variation>H</variation>
    <location>
        <position position="30"/>
    </location>
</feature>
<feature type="sequence conflict" description="In Ref. 1; CAA52269." evidence="2" ref="1">
    <original>A</original>
    <variation>L</variation>
    <location>
        <position position="50"/>
    </location>
</feature>
<feature type="sequence conflict" description="In Ref. 1; CAA52269." evidence="2" ref="1">
    <original>Y</original>
    <variation>N</variation>
    <location>
        <position position="190"/>
    </location>
</feature>
<feature type="sequence conflict" description="In Ref. 1; CAA52269." evidence="2" ref="1">
    <original>I</original>
    <variation>L</variation>
    <location>
        <position position="251"/>
    </location>
</feature>
<feature type="sequence conflict" description="In Ref. 1; CAA52269." evidence="2" ref="1">
    <original>QF</original>
    <variation>PC</variation>
    <location>
        <begin position="255"/>
        <end position="256"/>
    </location>
</feature>
<feature type="sequence conflict" description="In Ref. 1; CAA52269." evidence="2" ref="1">
    <original>L</original>
    <variation>V</variation>
    <location>
        <position position="301"/>
    </location>
</feature>
<feature type="sequence conflict" description="In Ref. 1; CAA52269." evidence="2" ref="1">
    <original>R</original>
    <variation>L</variation>
    <location>
        <position position="339"/>
    </location>
</feature>
<feature type="sequence conflict" description="In Ref. 1; CAA52269." evidence="2" ref="1">
    <original>PGV</original>
    <variation>QVF</variation>
    <location>
        <begin position="372"/>
        <end position="374"/>
    </location>
</feature>
<feature type="sequence conflict" description="In Ref. 1; CAA52269." evidence="2" ref="1">
    <original>W</original>
    <variation>G</variation>
    <location>
        <position position="385"/>
    </location>
</feature>
<feature type="sequence conflict" description="In Ref. 1; CAA52269." evidence="2" ref="1">
    <original>A</original>
    <variation>T</variation>
    <location>
        <position position="414"/>
    </location>
</feature>
<dbReference type="EC" id="4.1.1.39" evidence="1"/>
<dbReference type="EMBL" id="X74156">
    <property type="protein sequence ID" value="CAA52269.1"/>
    <property type="molecule type" value="Genomic_DNA"/>
</dbReference>
<dbReference type="EMBL" id="AB066207">
    <property type="protein sequence ID" value="BAB62086.1"/>
    <property type="molecule type" value="Genomic_DNA"/>
</dbReference>
<dbReference type="EMBL" id="AP005672">
    <property type="protein sequence ID" value="BAC85044.1"/>
    <property type="molecule type" value="Genomic_DNA"/>
</dbReference>
<dbReference type="PIR" id="S34663">
    <property type="entry name" value="S34663"/>
</dbReference>
<dbReference type="RefSeq" id="NP_904194.1">
    <property type="nucleotide sequence ID" value="NC_005087.2"/>
</dbReference>
<dbReference type="SMR" id="P34915"/>
<dbReference type="FunCoup" id="P34915">
    <property type="interactions" value="663"/>
</dbReference>
<dbReference type="STRING" id="3218.P34915"/>
<dbReference type="GeneID" id="2546763"/>
<dbReference type="KEGG" id="ppp:2546763"/>
<dbReference type="InParanoid" id="P34915"/>
<dbReference type="OrthoDB" id="563909at2759"/>
<dbReference type="Proteomes" id="UP000006727">
    <property type="component" value="Chloroplast"/>
</dbReference>
<dbReference type="GO" id="GO:0009507">
    <property type="term" value="C:chloroplast"/>
    <property type="evidence" value="ECO:0007669"/>
    <property type="project" value="UniProtKB-SubCell"/>
</dbReference>
<dbReference type="GO" id="GO:0000287">
    <property type="term" value="F:magnesium ion binding"/>
    <property type="evidence" value="ECO:0007669"/>
    <property type="project" value="UniProtKB-UniRule"/>
</dbReference>
<dbReference type="GO" id="GO:0004497">
    <property type="term" value="F:monooxygenase activity"/>
    <property type="evidence" value="ECO:0007669"/>
    <property type="project" value="UniProtKB-KW"/>
</dbReference>
<dbReference type="GO" id="GO:0016984">
    <property type="term" value="F:ribulose-bisphosphate carboxylase activity"/>
    <property type="evidence" value="ECO:0007669"/>
    <property type="project" value="UniProtKB-UniRule"/>
</dbReference>
<dbReference type="GO" id="GO:0009853">
    <property type="term" value="P:photorespiration"/>
    <property type="evidence" value="ECO:0007669"/>
    <property type="project" value="UniProtKB-KW"/>
</dbReference>
<dbReference type="GO" id="GO:0019253">
    <property type="term" value="P:reductive pentose-phosphate cycle"/>
    <property type="evidence" value="ECO:0007669"/>
    <property type="project" value="UniProtKB-UniRule"/>
</dbReference>
<dbReference type="CDD" id="cd08212">
    <property type="entry name" value="RuBisCO_large_I"/>
    <property type="match status" value="1"/>
</dbReference>
<dbReference type="FunFam" id="3.20.20.110:FF:000001">
    <property type="entry name" value="Ribulose bisphosphate carboxylase large chain"/>
    <property type="match status" value="1"/>
</dbReference>
<dbReference type="FunFam" id="3.30.70.150:FF:000001">
    <property type="entry name" value="Ribulose bisphosphate carboxylase large chain"/>
    <property type="match status" value="1"/>
</dbReference>
<dbReference type="Gene3D" id="3.20.20.110">
    <property type="entry name" value="Ribulose bisphosphate carboxylase, large subunit, C-terminal domain"/>
    <property type="match status" value="1"/>
</dbReference>
<dbReference type="Gene3D" id="3.30.70.150">
    <property type="entry name" value="RuBisCO large subunit, N-terminal domain"/>
    <property type="match status" value="1"/>
</dbReference>
<dbReference type="HAMAP" id="MF_01338">
    <property type="entry name" value="RuBisCO_L_type1"/>
    <property type="match status" value="1"/>
</dbReference>
<dbReference type="InterPro" id="IPR033966">
    <property type="entry name" value="RuBisCO"/>
</dbReference>
<dbReference type="InterPro" id="IPR020878">
    <property type="entry name" value="RuBisCo_large_chain_AS"/>
</dbReference>
<dbReference type="InterPro" id="IPR000685">
    <property type="entry name" value="RuBisCO_lsu_C"/>
</dbReference>
<dbReference type="InterPro" id="IPR036376">
    <property type="entry name" value="RuBisCO_lsu_C_sf"/>
</dbReference>
<dbReference type="InterPro" id="IPR017443">
    <property type="entry name" value="RuBisCO_lsu_fd_N"/>
</dbReference>
<dbReference type="InterPro" id="IPR036422">
    <property type="entry name" value="RuBisCO_lsu_N_sf"/>
</dbReference>
<dbReference type="InterPro" id="IPR020888">
    <property type="entry name" value="RuBisCO_lsuI"/>
</dbReference>
<dbReference type="NCBIfam" id="NF003252">
    <property type="entry name" value="PRK04208.1"/>
    <property type="match status" value="1"/>
</dbReference>
<dbReference type="PANTHER" id="PTHR42704">
    <property type="entry name" value="RIBULOSE BISPHOSPHATE CARBOXYLASE"/>
    <property type="match status" value="1"/>
</dbReference>
<dbReference type="PANTHER" id="PTHR42704:SF17">
    <property type="entry name" value="RIBULOSE BISPHOSPHATE CARBOXYLASE LARGE CHAIN"/>
    <property type="match status" value="1"/>
</dbReference>
<dbReference type="Pfam" id="PF00016">
    <property type="entry name" value="RuBisCO_large"/>
    <property type="match status" value="1"/>
</dbReference>
<dbReference type="Pfam" id="PF02788">
    <property type="entry name" value="RuBisCO_large_N"/>
    <property type="match status" value="1"/>
</dbReference>
<dbReference type="SFLD" id="SFLDG01052">
    <property type="entry name" value="RuBisCO"/>
    <property type="match status" value="1"/>
</dbReference>
<dbReference type="SFLD" id="SFLDS00014">
    <property type="entry name" value="RuBisCO"/>
    <property type="match status" value="1"/>
</dbReference>
<dbReference type="SFLD" id="SFLDG00301">
    <property type="entry name" value="RuBisCO-like_proteins"/>
    <property type="match status" value="1"/>
</dbReference>
<dbReference type="SUPFAM" id="SSF51649">
    <property type="entry name" value="RuBisCo, C-terminal domain"/>
    <property type="match status" value="1"/>
</dbReference>
<dbReference type="SUPFAM" id="SSF54966">
    <property type="entry name" value="RuBisCO, large subunit, small (N-terminal) domain"/>
    <property type="match status" value="1"/>
</dbReference>
<dbReference type="PROSITE" id="PS00157">
    <property type="entry name" value="RUBISCO_LARGE"/>
    <property type="match status" value="1"/>
</dbReference>
<geneLocation type="chloroplast"/>
<gene>
    <name evidence="1" type="primary">rbcL</name>
</gene>
<organism>
    <name type="scientific">Physcomitrium patens</name>
    <name type="common">Spreading-leaved earth moss</name>
    <name type="synonym">Physcomitrella patens</name>
    <dbReference type="NCBI Taxonomy" id="3218"/>
    <lineage>
        <taxon>Eukaryota</taxon>
        <taxon>Viridiplantae</taxon>
        <taxon>Streptophyta</taxon>
        <taxon>Embryophyta</taxon>
        <taxon>Bryophyta</taxon>
        <taxon>Bryophytina</taxon>
        <taxon>Bryopsida</taxon>
        <taxon>Funariidae</taxon>
        <taxon>Funariales</taxon>
        <taxon>Funariaceae</taxon>
        <taxon>Physcomitrium</taxon>
    </lineage>
</organism>
<sequence length="475" mass="52705">MSPRPEIKAGVGFKAGVKDYRLTYYTPDYQTKDTDILAAFRMTPQPGVPAEECGAAVAAESSTGTWTTVWTDGLTSLDRYKGRCYAIEPVAGEENQYIAYVAYPLDLFEEGSVTNLFTSIVGNVFGFKALRALRLEDLRIPPAYSKTFQGPPHGIQVERDKLNKYGRPLLGCTIKPKLGLSAKNYGRAVYECLRGGLDFTKDDENVNSQPFMRWRDRFLFCAEAIYKSQGETGEIKGHYLNATAGTCEEMIKRAQFARELGMPIVMHDYLTGGFTANTSLAHYCRDNGLLLHIHRAMHAVLDRQKNHGMHFRVLAKALRLSGGDHIHSGTVVGKLEGERQVTLGFVDLLRDDYIEKDRSRGIYFTQDWVSLPGVLPVASGGIHVWHMPALTEIFGDDSVLQFGGGTLGHPWGNAPGAVANRVALEACVQARNEGRDLAREGNEIIREAAKWSPELAAACEVWKEIKFEFDTVDTL</sequence>
<accession>P34915</accession>
<accession>Q95FY7</accession>
<name>RBL_PHYPA</name>
<evidence type="ECO:0000255" key="1">
    <source>
        <dbReference type="HAMAP-Rule" id="MF_01338"/>
    </source>
</evidence>
<evidence type="ECO:0000305" key="2"/>